<proteinExistence type="inferred from homology"/>
<evidence type="ECO:0000255" key="1">
    <source>
        <dbReference type="HAMAP-Rule" id="MF_01576"/>
    </source>
</evidence>
<organism>
    <name type="scientific">Ehrlichia ruminantium (strain Welgevonden)</name>
    <dbReference type="NCBI Taxonomy" id="254945"/>
    <lineage>
        <taxon>Bacteria</taxon>
        <taxon>Pseudomonadati</taxon>
        <taxon>Pseudomonadota</taxon>
        <taxon>Alphaproteobacteria</taxon>
        <taxon>Rickettsiales</taxon>
        <taxon>Anaplasmataceae</taxon>
        <taxon>Ehrlichia</taxon>
    </lineage>
</organism>
<sequence>MEGNIVSGKAVADNITNILATCISDLKAQHNLTPCLIVVLVGDDPASQLYVRNKQRKAEMLGLRSETMLLPSTISESSLIEKIHQLNNDDSVHGILVQLPVPRHIDKNLIINTIDPKKDVDGFHNENVGRLFTGQKKNCLVPCTPQGCLYLIKTITRNLSGSDAVVIGRSNIVGKPMACLLLGENCTVTTVHSATRDLPDYCRRADILVAAVGIPRFVKYSWVKHGAIVIDVGINSIEEDGVKKFVGDVDFAEVNKIASAITPVPGGVGPMTIAFLMVNTIIAACNQSGIDGFLEKYLDL</sequence>
<reference key="1">
    <citation type="journal article" date="2005" name="Proc. Natl. Acad. Sci. U.S.A.">
        <title>The genome of the heartwater agent Ehrlichia ruminantium contains multiple tandem repeats of actively variable copy number.</title>
        <authorList>
            <person name="Collins N.E."/>
            <person name="Liebenberg J."/>
            <person name="de Villiers E.P."/>
            <person name="Brayton K.A."/>
            <person name="Louw E."/>
            <person name="Pretorius A."/>
            <person name="Faber F.E."/>
            <person name="van Heerden H."/>
            <person name="Josemans A."/>
            <person name="van Kleef M."/>
            <person name="Steyn H.C."/>
            <person name="van Strijp M.F."/>
            <person name="Zweygarth E."/>
            <person name="Jongejan F."/>
            <person name="Maillard J.C."/>
            <person name="Berthier D."/>
            <person name="Botha M."/>
            <person name="Joubert F."/>
            <person name="Corton C.H."/>
            <person name="Thomson N.R."/>
            <person name="Allsopp M.T."/>
            <person name="Allsopp B.A."/>
        </authorList>
    </citation>
    <scope>NUCLEOTIDE SEQUENCE [LARGE SCALE GENOMIC DNA]</scope>
    <source>
        <strain>Welgevonden</strain>
    </source>
</reference>
<reference key="2">
    <citation type="journal article" date="2006" name="J. Bacteriol.">
        <title>Comparative genomic analysis of three strains of Ehrlichia ruminantium reveals an active process of genome size plasticity.</title>
        <authorList>
            <person name="Frutos R."/>
            <person name="Viari A."/>
            <person name="Ferraz C."/>
            <person name="Morgat A."/>
            <person name="Eychenie S."/>
            <person name="Kandassamy Y."/>
            <person name="Chantal I."/>
            <person name="Bensaid A."/>
            <person name="Coissac E."/>
            <person name="Vachiery N."/>
            <person name="Demaille J."/>
            <person name="Martinez D."/>
        </authorList>
    </citation>
    <scope>NUCLEOTIDE SEQUENCE [LARGE SCALE GENOMIC DNA]</scope>
    <source>
        <strain>Welgevonden</strain>
    </source>
</reference>
<feature type="chain" id="PRO_0000268343" description="Bifunctional protein FolD">
    <location>
        <begin position="1"/>
        <end position="300"/>
    </location>
</feature>
<feature type="binding site" evidence="1">
    <location>
        <begin position="168"/>
        <end position="170"/>
    </location>
    <ligand>
        <name>NADP(+)</name>
        <dbReference type="ChEBI" id="CHEBI:58349"/>
    </ligand>
</feature>
<feature type="binding site" evidence="1">
    <location>
        <position position="193"/>
    </location>
    <ligand>
        <name>NADP(+)</name>
        <dbReference type="ChEBI" id="CHEBI:58349"/>
    </ligand>
</feature>
<feature type="binding site" evidence="1">
    <location>
        <position position="234"/>
    </location>
    <ligand>
        <name>NADP(+)</name>
        <dbReference type="ChEBI" id="CHEBI:58349"/>
    </ligand>
</feature>
<gene>
    <name evidence="1" type="primary">folD</name>
    <name type="ordered locus">Erum6730</name>
    <name type="ordered locus">ERWE_CDS_07060</name>
</gene>
<protein>
    <recommendedName>
        <fullName evidence="1">Bifunctional protein FolD</fullName>
    </recommendedName>
    <domain>
        <recommendedName>
            <fullName evidence="1">Methylenetetrahydrofolate dehydrogenase</fullName>
            <ecNumber evidence="1">1.5.1.5</ecNumber>
        </recommendedName>
    </domain>
    <domain>
        <recommendedName>
            <fullName evidence="1">Methenyltetrahydrofolate cyclohydrolase</fullName>
            <ecNumber evidence="1">3.5.4.9</ecNumber>
        </recommendedName>
    </domain>
</protein>
<dbReference type="EC" id="1.5.1.5" evidence="1"/>
<dbReference type="EC" id="3.5.4.9" evidence="1"/>
<dbReference type="EMBL" id="CR767821">
    <property type="protein sequence ID" value="CAH58405.1"/>
    <property type="molecule type" value="Genomic_DNA"/>
</dbReference>
<dbReference type="EMBL" id="CR925678">
    <property type="protein sequence ID" value="CAI27200.1"/>
    <property type="molecule type" value="Genomic_DNA"/>
</dbReference>
<dbReference type="RefSeq" id="WP_011155352.1">
    <property type="nucleotide sequence ID" value="NC_005295.2"/>
</dbReference>
<dbReference type="SMR" id="Q5HAK8"/>
<dbReference type="GeneID" id="33058398"/>
<dbReference type="KEGG" id="eru:Erum6730"/>
<dbReference type="KEGG" id="erw:ERWE_CDS_07060"/>
<dbReference type="eggNOG" id="COG0190">
    <property type="taxonomic scope" value="Bacteria"/>
</dbReference>
<dbReference type="HOGENOM" id="CLU_034045_1_2_5"/>
<dbReference type="UniPathway" id="UPA00193"/>
<dbReference type="Proteomes" id="UP000001021">
    <property type="component" value="Chromosome"/>
</dbReference>
<dbReference type="GO" id="GO:0005829">
    <property type="term" value="C:cytosol"/>
    <property type="evidence" value="ECO:0007669"/>
    <property type="project" value="TreeGrafter"/>
</dbReference>
<dbReference type="GO" id="GO:0004477">
    <property type="term" value="F:methenyltetrahydrofolate cyclohydrolase activity"/>
    <property type="evidence" value="ECO:0007669"/>
    <property type="project" value="UniProtKB-UniRule"/>
</dbReference>
<dbReference type="GO" id="GO:0004488">
    <property type="term" value="F:methylenetetrahydrofolate dehydrogenase (NADP+) activity"/>
    <property type="evidence" value="ECO:0007669"/>
    <property type="project" value="UniProtKB-UniRule"/>
</dbReference>
<dbReference type="GO" id="GO:0000105">
    <property type="term" value="P:L-histidine biosynthetic process"/>
    <property type="evidence" value="ECO:0007669"/>
    <property type="project" value="UniProtKB-KW"/>
</dbReference>
<dbReference type="GO" id="GO:0009086">
    <property type="term" value="P:methionine biosynthetic process"/>
    <property type="evidence" value="ECO:0007669"/>
    <property type="project" value="UniProtKB-KW"/>
</dbReference>
<dbReference type="GO" id="GO:0006164">
    <property type="term" value="P:purine nucleotide biosynthetic process"/>
    <property type="evidence" value="ECO:0007669"/>
    <property type="project" value="UniProtKB-KW"/>
</dbReference>
<dbReference type="GO" id="GO:0035999">
    <property type="term" value="P:tetrahydrofolate interconversion"/>
    <property type="evidence" value="ECO:0007669"/>
    <property type="project" value="UniProtKB-UniRule"/>
</dbReference>
<dbReference type="CDD" id="cd01080">
    <property type="entry name" value="NAD_bind_m-THF_DH_Cyclohyd"/>
    <property type="match status" value="1"/>
</dbReference>
<dbReference type="FunFam" id="3.40.50.720:FF:000006">
    <property type="entry name" value="Bifunctional protein FolD"/>
    <property type="match status" value="1"/>
</dbReference>
<dbReference type="FunFam" id="3.40.50.10860:FF:000005">
    <property type="entry name" value="C-1-tetrahydrofolate synthase, cytoplasmic, putative"/>
    <property type="match status" value="1"/>
</dbReference>
<dbReference type="Gene3D" id="3.40.50.10860">
    <property type="entry name" value="Leucine Dehydrogenase, chain A, domain 1"/>
    <property type="match status" value="1"/>
</dbReference>
<dbReference type="Gene3D" id="3.40.50.720">
    <property type="entry name" value="NAD(P)-binding Rossmann-like Domain"/>
    <property type="match status" value="1"/>
</dbReference>
<dbReference type="HAMAP" id="MF_01576">
    <property type="entry name" value="THF_DHG_CYH"/>
    <property type="match status" value="1"/>
</dbReference>
<dbReference type="InterPro" id="IPR046346">
    <property type="entry name" value="Aminoacid_DH-like_N_sf"/>
</dbReference>
<dbReference type="InterPro" id="IPR036291">
    <property type="entry name" value="NAD(P)-bd_dom_sf"/>
</dbReference>
<dbReference type="InterPro" id="IPR000672">
    <property type="entry name" value="THF_DH/CycHdrlase"/>
</dbReference>
<dbReference type="InterPro" id="IPR020630">
    <property type="entry name" value="THF_DH/CycHdrlase_cat_dom"/>
</dbReference>
<dbReference type="InterPro" id="IPR020867">
    <property type="entry name" value="THF_DH/CycHdrlase_CS"/>
</dbReference>
<dbReference type="InterPro" id="IPR020631">
    <property type="entry name" value="THF_DH/CycHdrlase_NAD-bd_dom"/>
</dbReference>
<dbReference type="NCBIfam" id="NF010784">
    <property type="entry name" value="PRK14187.1"/>
    <property type="match status" value="1"/>
</dbReference>
<dbReference type="NCBIfam" id="NF010785">
    <property type="entry name" value="PRK14188.1"/>
    <property type="match status" value="1"/>
</dbReference>
<dbReference type="PANTHER" id="PTHR48099:SF5">
    <property type="entry name" value="C-1-TETRAHYDROFOLATE SYNTHASE, CYTOPLASMIC"/>
    <property type="match status" value="1"/>
</dbReference>
<dbReference type="PANTHER" id="PTHR48099">
    <property type="entry name" value="C-1-TETRAHYDROFOLATE SYNTHASE, CYTOPLASMIC-RELATED"/>
    <property type="match status" value="1"/>
</dbReference>
<dbReference type="Pfam" id="PF00763">
    <property type="entry name" value="THF_DHG_CYH"/>
    <property type="match status" value="1"/>
</dbReference>
<dbReference type="Pfam" id="PF02882">
    <property type="entry name" value="THF_DHG_CYH_C"/>
    <property type="match status" value="1"/>
</dbReference>
<dbReference type="PRINTS" id="PR00085">
    <property type="entry name" value="THFDHDRGNASE"/>
</dbReference>
<dbReference type="SUPFAM" id="SSF53223">
    <property type="entry name" value="Aminoacid dehydrogenase-like, N-terminal domain"/>
    <property type="match status" value="1"/>
</dbReference>
<dbReference type="SUPFAM" id="SSF51735">
    <property type="entry name" value="NAD(P)-binding Rossmann-fold domains"/>
    <property type="match status" value="1"/>
</dbReference>
<dbReference type="PROSITE" id="PS00766">
    <property type="entry name" value="THF_DHG_CYH_1"/>
    <property type="match status" value="1"/>
</dbReference>
<dbReference type="PROSITE" id="PS00767">
    <property type="entry name" value="THF_DHG_CYH_2"/>
    <property type="match status" value="1"/>
</dbReference>
<keyword id="KW-0028">Amino-acid biosynthesis</keyword>
<keyword id="KW-0368">Histidine biosynthesis</keyword>
<keyword id="KW-0378">Hydrolase</keyword>
<keyword id="KW-0486">Methionine biosynthesis</keyword>
<keyword id="KW-0511">Multifunctional enzyme</keyword>
<keyword id="KW-0521">NADP</keyword>
<keyword id="KW-0554">One-carbon metabolism</keyword>
<keyword id="KW-0560">Oxidoreductase</keyword>
<keyword id="KW-0658">Purine biosynthesis</keyword>
<accession>Q5HAK8</accession>
<accession>Q5FDG2</accession>
<comment type="function">
    <text evidence="1">Catalyzes the oxidation of 5,10-methylenetetrahydrofolate to 5,10-methenyltetrahydrofolate and then the hydrolysis of 5,10-methenyltetrahydrofolate to 10-formyltetrahydrofolate.</text>
</comment>
<comment type="catalytic activity">
    <reaction evidence="1">
        <text>(6R)-5,10-methylene-5,6,7,8-tetrahydrofolate + NADP(+) = (6R)-5,10-methenyltetrahydrofolate + NADPH</text>
        <dbReference type="Rhea" id="RHEA:22812"/>
        <dbReference type="ChEBI" id="CHEBI:15636"/>
        <dbReference type="ChEBI" id="CHEBI:57455"/>
        <dbReference type="ChEBI" id="CHEBI:57783"/>
        <dbReference type="ChEBI" id="CHEBI:58349"/>
        <dbReference type="EC" id="1.5.1.5"/>
    </reaction>
</comment>
<comment type="catalytic activity">
    <reaction evidence="1">
        <text>(6R)-5,10-methenyltetrahydrofolate + H2O = (6R)-10-formyltetrahydrofolate + H(+)</text>
        <dbReference type="Rhea" id="RHEA:23700"/>
        <dbReference type="ChEBI" id="CHEBI:15377"/>
        <dbReference type="ChEBI" id="CHEBI:15378"/>
        <dbReference type="ChEBI" id="CHEBI:57455"/>
        <dbReference type="ChEBI" id="CHEBI:195366"/>
        <dbReference type="EC" id="3.5.4.9"/>
    </reaction>
</comment>
<comment type="pathway">
    <text evidence="1">One-carbon metabolism; tetrahydrofolate interconversion.</text>
</comment>
<comment type="subunit">
    <text evidence="1">Homodimer.</text>
</comment>
<comment type="similarity">
    <text evidence="1">Belongs to the tetrahydrofolate dehydrogenase/cyclohydrolase family.</text>
</comment>
<name>FOLD_EHRRW</name>